<protein>
    <recommendedName>
        <fullName evidence="1">D-aminoacyl-tRNA deacylase</fullName>
        <shortName evidence="1">DTD</shortName>
        <ecNumber evidence="1">3.1.1.96</ecNumber>
    </recommendedName>
    <alternativeName>
        <fullName evidence="1">Gly-tRNA(Ala) deacylase</fullName>
    </alternativeName>
</protein>
<accession>Q5M6B2</accession>
<proteinExistence type="inferred from homology"/>
<gene>
    <name evidence="1" type="primary">dtd</name>
    <name type="ordered locus">stu0146</name>
</gene>
<name>DTD_STRT2</name>
<comment type="function">
    <text evidence="1">An aminoacyl-tRNA editing enzyme that deacylates mischarged D-aminoacyl-tRNAs. Also deacylates mischarged glycyl-tRNA(Ala), protecting cells against glycine mischarging by AlaRS. Acts via tRNA-based rather than protein-based catalysis; rejects L-amino acids rather than detecting D-amino acids in the active site. By recycling D-aminoacyl-tRNA to D-amino acids and free tRNA molecules, this enzyme counteracts the toxicity associated with the formation of D-aminoacyl-tRNA entities in vivo and helps enforce protein L-homochirality.</text>
</comment>
<comment type="catalytic activity">
    <reaction evidence="1">
        <text>glycyl-tRNA(Ala) + H2O = tRNA(Ala) + glycine + H(+)</text>
        <dbReference type="Rhea" id="RHEA:53744"/>
        <dbReference type="Rhea" id="RHEA-COMP:9657"/>
        <dbReference type="Rhea" id="RHEA-COMP:13640"/>
        <dbReference type="ChEBI" id="CHEBI:15377"/>
        <dbReference type="ChEBI" id="CHEBI:15378"/>
        <dbReference type="ChEBI" id="CHEBI:57305"/>
        <dbReference type="ChEBI" id="CHEBI:78442"/>
        <dbReference type="ChEBI" id="CHEBI:78522"/>
        <dbReference type="EC" id="3.1.1.96"/>
    </reaction>
</comment>
<comment type="catalytic activity">
    <reaction evidence="1">
        <text>a D-aminoacyl-tRNA + H2O = a tRNA + a D-alpha-amino acid + H(+)</text>
        <dbReference type="Rhea" id="RHEA:13953"/>
        <dbReference type="Rhea" id="RHEA-COMP:10123"/>
        <dbReference type="Rhea" id="RHEA-COMP:10124"/>
        <dbReference type="ChEBI" id="CHEBI:15377"/>
        <dbReference type="ChEBI" id="CHEBI:15378"/>
        <dbReference type="ChEBI" id="CHEBI:59871"/>
        <dbReference type="ChEBI" id="CHEBI:78442"/>
        <dbReference type="ChEBI" id="CHEBI:79333"/>
        <dbReference type="EC" id="3.1.1.96"/>
    </reaction>
</comment>
<comment type="subunit">
    <text evidence="1">Homodimer.</text>
</comment>
<comment type="subcellular location">
    <subcellularLocation>
        <location evidence="1">Cytoplasm</location>
    </subcellularLocation>
</comment>
<comment type="domain">
    <text evidence="1">A Gly-cisPro motif from one monomer fits into the active site of the other monomer to allow specific chiral rejection of L-amino acids.</text>
</comment>
<comment type="similarity">
    <text evidence="1">Belongs to the DTD family.</text>
</comment>
<feature type="chain" id="PRO_0000164608" description="D-aminoacyl-tRNA deacylase">
    <location>
        <begin position="1"/>
        <end position="147"/>
    </location>
</feature>
<feature type="short sequence motif" description="Gly-cisPro motif, important for rejection of L-amino acids" evidence="1">
    <location>
        <begin position="136"/>
        <end position="137"/>
    </location>
</feature>
<keyword id="KW-0963">Cytoplasm</keyword>
<keyword id="KW-0378">Hydrolase</keyword>
<keyword id="KW-1185">Reference proteome</keyword>
<keyword id="KW-0694">RNA-binding</keyword>
<keyword id="KW-0820">tRNA-binding</keyword>
<dbReference type="EC" id="3.1.1.96" evidence="1"/>
<dbReference type="EMBL" id="CP000023">
    <property type="protein sequence ID" value="AAV59871.1"/>
    <property type="molecule type" value="Genomic_DNA"/>
</dbReference>
<dbReference type="RefSeq" id="WP_004197391.1">
    <property type="nucleotide sequence ID" value="NC_006448.1"/>
</dbReference>
<dbReference type="SMR" id="Q5M6B2"/>
<dbReference type="STRING" id="264199.stu0146"/>
<dbReference type="GeneID" id="66898090"/>
<dbReference type="KEGG" id="stl:stu0146"/>
<dbReference type="eggNOG" id="COG1490">
    <property type="taxonomic scope" value="Bacteria"/>
</dbReference>
<dbReference type="HOGENOM" id="CLU_076901_1_0_9"/>
<dbReference type="Proteomes" id="UP000001170">
    <property type="component" value="Chromosome"/>
</dbReference>
<dbReference type="GO" id="GO:0005737">
    <property type="term" value="C:cytoplasm"/>
    <property type="evidence" value="ECO:0007669"/>
    <property type="project" value="UniProtKB-SubCell"/>
</dbReference>
<dbReference type="GO" id="GO:0051500">
    <property type="term" value="F:D-tyrosyl-tRNA(Tyr) deacylase activity"/>
    <property type="evidence" value="ECO:0007669"/>
    <property type="project" value="TreeGrafter"/>
</dbReference>
<dbReference type="GO" id="GO:0106026">
    <property type="term" value="F:Gly-tRNA(Ala) deacylase activity"/>
    <property type="evidence" value="ECO:0007669"/>
    <property type="project" value="UniProtKB-UniRule"/>
</dbReference>
<dbReference type="GO" id="GO:0043908">
    <property type="term" value="F:Ser(Gly)-tRNA(Ala) hydrolase activity"/>
    <property type="evidence" value="ECO:0007669"/>
    <property type="project" value="UniProtKB-UniRule"/>
</dbReference>
<dbReference type="GO" id="GO:0000049">
    <property type="term" value="F:tRNA binding"/>
    <property type="evidence" value="ECO:0007669"/>
    <property type="project" value="UniProtKB-UniRule"/>
</dbReference>
<dbReference type="GO" id="GO:0019478">
    <property type="term" value="P:D-amino acid catabolic process"/>
    <property type="evidence" value="ECO:0007669"/>
    <property type="project" value="UniProtKB-UniRule"/>
</dbReference>
<dbReference type="CDD" id="cd00563">
    <property type="entry name" value="Dtyr_deacylase"/>
    <property type="match status" value="1"/>
</dbReference>
<dbReference type="FunFam" id="3.50.80.10:FF:000001">
    <property type="entry name" value="D-aminoacyl-tRNA deacylase"/>
    <property type="match status" value="1"/>
</dbReference>
<dbReference type="Gene3D" id="3.50.80.10">
    <property type="entry name" value="D-tyrosyl-tRNA(Tyr) deacylase"/>
    <property type="match status" value="1"/>
</dbReference>
<dbReference type="HAMAP" id="MF_00518">
    <property type="entry name" value="Deacylase_Dtd"/>
    <property type="match status" value="1"/>
</dbReference>
<dbReference type="InterPro" id="IPR003732">
    <property type="entry name" value="Daa-tRNA_deacyls_DTD"/>
</dbReference>
<dbReference type="InterPro" id="IPR023509">
    <property type="entry name" value="DTD-like_sf"/>
</dbReference>
<dbReference type="NCBIfam" id="TIGR00256">
    <property type="entry name" value="D-aminoacyl-tRNA deacylase"/>
    <property type="match status" value="1"/>
</dbReference>
<dbReference type="PANTHER" id="PTHR10472:SF5">
    <property type="entry name" value="D-AMINOACYL-TRNA DEACYLASE 1"/>
    <property type="match status" value="1"/>
</dbReference>
<dbReference type="PANTHER" id="PTHR10472">
    <property type="entry name" value="D-TYROSYL-TRNA TYR DEACYLASE"/>
    <property type="match status" value="1"/>
</dbReference>
<dbReference type="Pfam" id="PF02580">
    <property type="entry name" value="Tyr_Deacylase"/>
    <property type="match status" value="1"/>
</dbReference>
<dbReference type="SUPFAM" id="SSF69500">
    <property type="entry name" value="DTD-like"/>
    <property type="match status" value="1"/>
</dbReference>
<sequence>MKIVIQRVQSASVAIEDSTVGTIKQGLLLLVGVGPEDTKEDLDYAVRKIINMRIFSDEDGKMNLSVKDIGGQILSISQFTLFADTKKGNRPAFTGAAKPDMASQFYDDFNQSLSSYVPVERGRFGADMQVSLVNDGPVTVILDTKNR</sequence>
<organism>
    <name type="scientific">Streptococcus thermophilus (strain ATCC BAA-250 / LMG 18311)</name>
    <dbReference type="NCBI Taxonomy" id="264199"/>
    <lineage>
        <taxon>Bacteria</taxon>
        <taxon>Bacillati</taxon>
        <taxon>Bacillota</taxon>
        <taxon>Bacilli</taxon>
        <taxon>Lactobacillales</taxon>
        <taxon>Streptococcaceae</taxon>
        <taxon>Streptococcus</taxon>
    </lineage>
</organism>
<reference key="1">
    <citation type="journal article" date="2004" name="Nat. Biotechnol.">
        <title>Complete sequence and comparative genome analysis of the dairy bacterium Streptococcus thermophilus.</title>
        <authorList>
            <person name="Bolotin A."/>
            <person name="Quinquis B."/>
            <person name="Renault P."/>
            <person name="Sorokin A."/>
            <person name="Ehrlich S.D."/>
            <person name="Kulakauskas S."/>
            <person name="Lapidus A."/>
            <person name="Goltsman E."/>
            <person name="Mazur M."/>
            <person name="Pusch G.D."/>
            <person name="Fonstein M."/>
            <person name="Overbeek R."/>
            <person name="Kyprides N."/>
            <person name="Purnelle B."/>
            <person name="Prozzi D."/>
            <person name="Ngui K."/>
            <person name="Masuy D."/>
            <person name="Hancy F."/>
            <person name="Burteau S."/>
            <person name="Boutry M."/>
            <person name="Delcour J."/>
            <person name="Goffeau A."/>
            <person name="Hols P."/>
        </authorList>
    </citation>
    <scope>NUCLEOTIDE SEQUENCE [LARGE SCALE GENOMIC DNA]</scope>
    <source>
        <strain>ATCC BAA-250 / LMG 18311</strain>
    </source>
</reference>
<evidence type="ECO:0000255" key="1">
    <source>
        <dbReference type="HAMAP-Rule" id="MF_00518"/>
    </source>
</evidence>